<protein>
    <recommendedName>
        <fullName evidence="1">Nucleoside triphosphatase NudI</fullName>
        <ecNumber evidence="1">3.6.1.9</ecNumber>
    </recommendedName>
    <alternativeName>
        <fullName evidence="1">Nucleotide diphosphatase NudI</fullName>
    </alternativeName>
    <alternativeName>
        <fullName evidence="1">Pyrimidine deoxynucleoside triphosphate diphosphatase</fullName>
    </alternativeName>
    <alternativeName>
        <fullName evidence="1">dCTP diphosphatase</fullName>
        <ecNumber evidence="1">3.6.1.12</ecNumber>
    </alternativeName>
    <alternativeName>
        <fullName evidence="1">dTTP diphosphatase</fullName>
        <ecNumber evidence="1">3.6.1.-</ecNumber>
    </alternativeName>
    <alternativeName>
        <fullName evidence="1">dUTP diphosphatase</fullName>
        <ecNumber evidence="1">3.6.1.23</ecNumber>
    </alternativeName>
</protein>
<comment type="function">
    <text evidence="1">Catalyzes the hydrolysis of nucleoside triphosphates, with a preference for pyrimidine deoxynucleoside triphosphates (dUTP, dTTP and dCTP).</text>
</comment>
<comment type="catalytic activity">
    <reaction evidence="1">
        <text>a ribonucleoside 5'-triphosphate + H2O = a ribonucleoside 5'-phosphate + diphosphate + H(+)</text>
        <dbReference type="Rhea" id="RHEA:23996"/>
        <dbReference type="ChEBI" id="CHEBI:15377"/>
        <dbReference type="ChEBI" id="CHEBI:15378"/>
        <dbReference type="ChEBI" id="CHEBI:33019"/>
        <dbReference type="ChEBI" id="CHEBI:58043"/>
        <dbReference type="ChEBI" id="CHEBI:61557"/>
        <dbReference type="EC" id="3.6.1.9"/>
    </reaction>
</comment>
<comment type="catalytic activity">
    <reaction evidence="1">
        <text>a 2'-deoxyribonucleoside 5'-triphosphate + H2O = a 2'-deoxyribonucleoside 5'-phosphate + diphosphate + H(+)</text>
        <dbReference type="Rhea" id="RHEA:44644"/>
        <dbReference type="ChEBI" id="CHEBI:15377"/>
        <dbReference type="ChEBI" id="CHEBI:15378"/>
        <dbReference type="ChEBI" id="CHEBI:33019"/>
        <dbReference type="ChEBI" id="CHEBI:61560"/>
        <dbReference type="ChEBI" id="CHEBI:65317"/>
        <dbReference type="EC" id="3.6.1.9"/>
    </reaction>
</comment>
<comment type="catalytic activity">
    <reaction evidence="1">
        <text>dUTP + H2O = dUMP + diphosphate + H(+)</text>
        <dbReference type="Rhea" id="RHEA:10248"/>
        <dbReference type="ChEBI" id="CHEBI:15377"/>
        <dbReference type="ChEBI" id="CHEBI:15378"/>
        <dbReference type="ChEBI" id="CHEBI:33019"/>
        <dbReference type="ChEBI" id="CHEBI:61555"/>
        <dbReference type="ChEBI" id="CHEBI:246422"/>
        <dbReference type="EC" id="3.6.1.9"/>
    </reaction>
</comment>
<comment type="catalytic activity">
    <reaction evidence="1">
        <text>dUTP + H2O = dUMP + diphosphate + H(+)</text>
        <dbReference type="Rhea" id="RHEA:10248"/>
        <dbReference type="ChEBI" id="CHEBI:15377"/>
        <dbReference type="ChEBI" id="CHEBI:15378"/>
        <dbReference type="ChEBI" id="CHEBI:33019"/>
        <dbReference type="ChEBI" id="CHEBI:61555"/>
        <dbReference type="ChEBI" id="CHEBI:246422"/>
        <dbReference type="EC" id="3.6.1.23"/>
    </reaction>
</comment>
<comment type="catalytic activity">
    <reaction evidence="1">
        <text>dTTP + H2O = dTMP + diphosphate + H(+)</text>
        <dbReference type="Rhea" id="RHEA:28534"/>
        <dbReference type="ChEBI" id="CHEBI:15377"/>
        <dbReference type="ChEBI" id="CHEBI:15378"/>
        <dbReference type="ChEBI" id="CHEBI:33019"/>
        <dbReference type="ChEBI" id="CHEBI:37568"/>
        <dbReference type="ChEBI" id="CHEBI:63528"/>
        <dbReference type="EC" id="3.6.1.9"/>
    </reaction>
</comment>
<comment type="catalytic activity">
    <reaction evidence="1">
        <text>dCTP + H2O = dCMP + diphosphate + H(+)</text>
        <dbReference type="Rhea" id="RHEA:22636"/>
        <dbReference type="ChEBI" id="CHEBI:15377"/>
        <dbReference type="ChEBI" id="CHEBI:15378"/>
        <dbReference type="ChEBI" id="CHEBI:33019"/>
        <dbReference type="ChEBI" id="CHEBI:57566"/>
        <dbReference type="ChEBI" id="CHEBI:61481"/>
        <dbReference type="EC" id="3.6.1.9"/>
    </reaction>
</comment>
<comment type="catalytic activity">
    <reaction evidence="1">
        <text>dCTP + H2O = dCMP + diphosphate + H(+)</text>
        <dbReference type="Rhea" id="RHEA:22636"/>
        <dbReference type="ChEBI" id="CHEBI:15377"/>
        <dbReference type="ChEBI" id="CHEBI:15378"/>
        <dbReference type="ChEBI" id="CHEBI:33019"/>
        <dbReference type="ChEBI" id="CHEBI:57566"/>
        <dbReference type="ChEBI" id="CHEBI:61481"/>
        <dbReference type="EC" id="3.6.1.12"/>
    </reaction>
</comment>
<comment type="cofactor">
    <cofactor evidence="1">
        <name>Mg(2+)</name>
        <dbReference type="ChEBI" id="CHEBI:18420"/>
    </cofactor>
</comment>
<comment type="subunit">
    <text evidence="1">Monomer.</text>
</comment>
<comment type="similarity">
    <text evidence="1">Belongs to the Nudix hydrolase family. NudI subfamily.</text>
</comment>
<keyword id="KW-0378">Hydrolase</keyword>
<keyword id="KW-0460">Magnesium</keyword>
<sequence>MRQRTIVCPLIQNDGCYLLCKMADNRGVFPGQWALSGGGVEPGERIEEALRREIREELGEQLILSDITPWTFRDDIRVKTYADGRQEEIYMIYLIFDCVSANRDICINDEFQDYAWVKPEELALYDLNVATRHTLALKGLL</sequence>
<gene>
    <name evidence="1" type="primary">nudI</name>
    <name type="ordered locus">STY2525</name>
    <name type="ordered locus">t0568</name>
</gene>
<reference key="1">
    <citation type="journal article" date="2001" name="Nature">
        <title>Complete genome sequence of a multiple drug resistant Salmonella enterica serovar Typhi CT18.</title>
        <authorList>
            <person name="Parkhill J."/>
            <person name="Dougan G."/>
            <person name="James K.D."/>
            <person name="Thomson N.R."/>
            <person name="Pickard D."/>
            <person name="Wain J."/>
            <person name="Churcher C.M."/>
            <person name="Mungall K.L."/>
            <person name="Bentley S.D."/>
            <person name="Holden M.T.G."/>
            <person name="Sebaihia M."/>
            <person name="Baker S."/>
            <person name="Basham D."/>
            <person name="Brooks K."/>
            <person name="Chillingworth T."/>
            <person name="Connerton P."/>
            <person name="Cronin A."/>
            <person name="Davis P."/>
            <person name="Davies R.M."/>
            <person name="Dowd L."/>
            <person name="White N."/>
            <person name="Farrar J."/>
            <person name="Feltwell T."/>
            <person name="Hamlin N."/>
            <person name="Haque A."/>
            <person name="Hien T.T."/>
            <person name="Holroyd S."/>
            <person name="Jagels K."/>
            <person name="Krogh A."/>
            <person name="Larsen T.S."/>
            <person name="Leather S."/>
            <person name="Moule S."/>
            <person name="O'Gaora P."/>
            <person name="Parry C."/>
            <person name="Quail M.A."/>
            <person name="Rutherford K.M."/>
            <person name="Simmonds M."/>
            <person name="Skelton J."/>
            <person name="Stevens K."/>
            <person name="Whitehead S."/>
            <person name="Barrell B.G."/>
        </authorList>
    </citation>
    <scope>NUCLEOTIDE SEQUENCE [LARGE SCALE GENOMIC DNA]</scope>
    <source>
        <strain>CT18</strain>
    </source>
</reference>
<reference key="2">
    <citation type="journal article" date="2003" name="J. Bacteriol.">
        <title>Comparative genomics of Salmonella enterica serovar Typhi strains Ty2 and CT18.</title>
        <authorList>
            <person name="Deng W."/>
            <person name="Liou S.-R."/>
            <person name="Plunkett G. III"/>
            <person name="Mayhew G.F."/>
            <person name="Rose D.J."/>
            <person name="Burland V."/>
            <person name="Kodoyianni V."/>
            <person name="Schwartz D.C."/>
            <person name="Blattner F.R."/>
        </authorList>
    </citation>
    <scope>NUCLEOTIDE SEQUENCE [LARGE SCALE GENOMIC DNA]</scope>
    <source>
        <strain>ATCC 700931 / Ty2</strain>
    </source>
</reference>
<proteinExistence type="inferred from homology"/>
<accession>Q8Z544</accession>
<accession>Q7CB82</accession>
<feature type="chain" id="PRO_0000342139" description="Nucleoside triphosphatase NudI">
    <location>
        <begin position="1"/>
        <end position="141"/>
    </location>
</feature>
<feature type="domain" description="Nudix hydrolase" evidence="1">
    <location>
        <begin position="1"/>
        <end position="141"/>
    </location>
</feature>
<feature type="short sequence motif" description="Nudix box">
    <location>
        <begin position="38"/>
        <end position="59"/>
    </location>
</feature>
<name>NUDI_SALTI</name>
<dbReference type="EC" id="3.6.1.9" evidence="1"/>
<dbReference type="EC" id="3.6.1.12" evidence="1"/>
<dbReference type="EC" id="3.6.1.-" evidence="1"/>
<dbReference type="EC" id="3.6.1.23" evidence="1"/>
<dbReference type="EMBL" id="AE014613">
    <property type="protein sequence ID" value="AAO68274.1"/>
    <property type="molecule type" value="Genomic_DNA"/>
</dbReference>
<dbReference type="EMBL" id="AL513382">
    <property type="protein sequence ID" value="CAD07528.1"/>
    <property type="molecule type" value="Genomic_DNA"/>
</dbReference>
<dbReference type="RefSeq" id="NP_456838.1">
    <property type="nucleotide sequence ID" value="NC_003198.1"/>
</dbReference>
<dbReference type="RefSeq" id="WP_001249902.1">
    <property type="nucleotide sequence ID" value="NZ_WSUR01000039.1"/>
</dbReference>
<dbReference type="SMR" id="Q8Z544"/>
<dbReference type="STRING" id="220341.gene:17586425"/>
<dbReference type="KEGG" id="stt:t0568"/>
<dbReference type="KEGG" id="sty:STY2525"/>
<dbReference type="PATRIC" id="fig|220341.7.peg.2556"/>
<dbReference type="eggNOG" id="COG0494">
    <property type="taxonomic scope" value="Bacteria"/>
</dbReference>
<dbReference type="HOGENOM" id="CLU_037162_31_0_6"/>
<dbReference type="OMA" id="EFDDYAW"/>
<dbReference type="OrthoDB" id="289720at2"/>
<dbReference type="Proteomes" id="UP000000541">
    <property type="component" value="Chromosome"/>
</dbReference>
<dbReference type="Proteomes" id="UP000002670">
    <property type="component" value="Chromosome"/>
</dbReference>
<dbReference type="GO" id="GO:0047840">
    <property type="term" value="F:dCTP diphosphatase activity"/>
    <property type="evidence" value="ECO:0007669"/>
    <property type="project" value="UniProtKB-EC"/>
</dbReference>
<dbReference type="GO" id="GO:0036218">
    <property type="term" value="F:dTTP diphosphatase activity"/>
    <property type="evidence" value="ECO:0007669"/>
    <property type="project" value="RHEA"/>
</dbReference>
<dbReference type="GO" id="GO:0004170">
    <property type="term" value="F:dUTP diphosphatase activity"/>
    <property type="evidence" value="ECO:0007669"/>
    <property type="project" value="UniProtKB-EC"/>
</dbReference>
<dbReference type="GO" id="GO:0000287">
    <property type="term" value="F:magnesium ion binding"/>
    <property type="evidence" value="ECO:0007669"/>
    <property type="project" value="UniProtKB-UniRule"/>
</dbReference>
<dbReference type="CDD" id="cd04696">
    <property type="entry name" value="NUDIX_NudI"/>
    <property type="match status" value="1"/>
</dbReference>
<dbReference type="Gene3D" id="3.90.79.10">
    <property type="entry name" value="Nucleoside Triphosphate Pyrophosphohydrolase"/>
    <property type="match status" value="1"/>
</dbReference>
<dbReference type="HAMAP" id="MF_01846">
    <property type="entry name" value="Nudix_NudI"/>
    <property type="match status" value="1"/>
</dbReference>
<dbReference type="InterPro" id="IPR023781">
    <property type="entry name" value="Nucleoside_triphosphatase_NudI"/>
</dbReference>
<dbReference type="InterPro" id="IPR020476">
    <property type="entry name" value="Nudix_hydrolase"/>
</dbReference>
<dbReference type="InterPro" id="IPR015797">
    <property type="entry name" value="NUDIX_hydrolase-like_dom_sf"/>
</dbReference>
<dbReference type="InterPro" id="IPR020084">
    <property type="entry name" value="NUDIX_hydrolase_CS"/>
</dbReference>
<dbReference type="InterPro" id="IPR000086">
    <property type="entry name" value="NUDIX_hydrolase_dom"/>
</dbReference>
<dbReference type="NCBIfam" id="NF012016">
    <property type="entry name" value="PRK15472.1"/>
    <property type="match status" value="1"/>
</dbReference>
<dbReference type="PANTHER" id="PTHR43046">
    <property type="entry name" value="GDP-MANNOSE MANNOSYL HYDROLASE"/>
    <property type="match status" value="1"/>
</dbReference>
<dbReference type="PANTHER" id="PTHR43046:SF14">
    <property type="entry name" value="MUTT_NUDIX FAMILY PROTEIN"/>
    <property type="match status" value="1"/>
</dbReference>
<dbReference type="Pfam" id="PF00293">
    <property type="entry name" value="NUDIX"/>
    <property type="match status" value="1"/>
</dbReference>
<dbReference type="PRINTS" id="PR00502">
    <property type="entry name" value="NUDIXFAMILY"/>
</dbReference>
<dbReference type="SUPFAM" id="SSF55811">
    <property type="entry name" value="Nudix"/>
    <property type="match status" value="1"/>
</dbReference>
<dbReference type="PROSITE" id="PS51462">
    <property type="entry name" value="NUDIX"/>
    <property type="match status" value="1"/>
</dbReference>
<dbReference type="PROSITE" id="PS00893">
    <property type="entry name" value="NUDIX_BOX"/>
    <property type="match status" value="1"/>
</dbReference>
<evidence type="ECO:0000255" key="1">
    <source>
        <dbReference type="HAMAP-Rule" id="MF_01846"/>
    </source>
</evidence>
<organism>
    <name type="scientific">Salmonella typhi</name>
    <dbReference type="NCBI Taxonomy" id="90370"/>
    <lineage>
        <taxon>Bacteria</taxon>
        <taxon>Pseudomonadati</taxon>
        <taxon>Pseudomonadota</taxon>
        <taxon>Gammaproteobacteria</taxon>
        <taxon>Enterobacterales</taxon>
        <taxon>Enterobacteriaceae</taxon>
        <taxon>Salmonella</taxon>
    </lineage>
</organism>